<name>RS7_THEYD</name>
<dbReference type="EMBL" id="CP001147">
    <property type="protein sequence ID" value="ACI20497.1"/>
    <property type="molecule type" value="Genomic_DNA"/>
</dbReference>
<dbReference type="RefSeq" id="WP_012545233.1">
    <property type="nucleotide sequence ID" value="NC_011296.1"/>
</dbReference>
<dbReference type="RefSeq" id="YP_002249249.1">
    <property type="nucleotide sequence ID" value="NC_011296.1"/>
</dbReference>
<dbReference type="SMR" id="B5YG51"/>
<dbReference type="FunCoup" id="B5YG51">
    <property type="interactions" value="520"/>
</dbReference>
<dbReference type="STRING" id="289376.THEYE_A1450"/>
<dbReference type="EnsemblBacteria" id="ACI20497">
    <property type="protein sequence ID" value="ACI20497"/>
    <property type="gene ID" value="THEYE_A1450"/>
</dbReference>
<dbReference type="KEGG" id="tye:THEYE_A1450"/>
<dbReference type="PATRIC" id="fig|289376.4.peg.1411"/>
<dbReference type="eggNOG" id="COG0049">
    <property type="taxonomic scope" value="Bacteria"/>
</dbReference>
<dbReference type="HOGENOM" id="CLU_072226_1_1_0"/>
<dbReference type="InParanoid" id="B5YG51"/>
<dbReference type="OrthoDB" id="9807653at2"/>
<dbReference type="Proteomes" id="UP000000718">
    <property type="component" value="Chromosome"/>
</dbReference>
<dbReference type="GO" id="GO:0022627">
    <property type="term" value="C:cytosolic small ribosomal subunit"/>
    <property type="evidence" value="ECO:0000318"/>
    <property type="project" value="GO_Central"/>
</dbReference>
<dbReference type="GO" id="GO:0005840">
    <property type="term" value="C:ribosome"/>
    <property type="evidence" value="ECO:0000318"/>
    <property type="project" value="GO_Central"/>
</dbReference>
<dbReference type="GO" id="GO:0003729">
    <property type="term" value="F:mRNA binding"/>
    <property type="evidence" value="ECO:0000318"/>
    <property type="project" value="GO_Central"/>
</dbReference>
<dbReference type="GO" id="GO:0019843">
    <property type="term" value="F:rRNA binding"/>
    <property type="evidence" value="ECO:0000318"/>
    <property type="project" value="GO_Central"/>
</dbReference>
<dbReference type="GO" id="GO:0003735">
    <property type="term" value="F:structural constituent of ribosome"/>
    <property type="evidence" value="ECO:0000318"/>
    <property type="project" value="GO_Central"/>
</dbReference>
<dbReference type="GO" id="GO:0000049">
    <property type="term" value="F:tRNA binding"/>
    <property type="evidence" value="ECO:0007669"/>
    <property type="project" value="UniProtKB-UniRule"/>
</dbReference>
<dbReference type="GO" id="GO:0000028">
    <property type="term" value="P:ribosomal small subunit assembly"/>
    <property type="evidence" value="ECO:0000318"/>
    <property type="project" value="GO_Central"/>
</dbReference>
<dbReference type="GO" id="GO:0006412">
    <property type="term" value="P:translation"/>
    <property type="evidence" value="ECO:0000318"/>
    <property type="project" value="GO_Central"/>
</dbReference>
<dbReference type="CDD" id="cd14869">
    <property type="entry name" value="uS7_Bacteria"/>
    <property type="match status" value="1"/>
</dbReference>
<dbReference type="FunFam" id="1.10.455.10:FF:000001">
    <property type="entry name" value="30S ribosomal protein S7"/>
    <property type="match status" value="1"/>
</dbReference>
<dbReference type="Gene3D" id="1.10.455.10">
    <property type="entry name" value="Ribosomal protein S7 domain"/>
    <property type="match status" value="1"/>
</dbReference>
<dbReference type="HAMAP" id="MF_00480_B">
    <property type="entry name" value="Ribosomal_uS7_B"/>
    <property type="match status" value="1"/>
</dbReference>
<dbReference type="InterPro" id="IPR000235">
    <property type="entry name" value="Ribosomal_uS7"/>
</dbReference>
<dbReference type="InterPro" id="IPR005717">
    <property type="entry name" value="Ribosomal_uS7_bac/org-type"/>
</dbReference>
<dbReference type="InterPro" id="IPR020606">
    <property type="entry name" value="Ribosomal_uS7_CS"/>
</dbReference>
<dbReference type="InterPro" id="IPR023798">
    <property type="entry name" value="Ribosomal_uS7_dom"/>
</dbReference>
<dbReference type="InterPro" id="IPR036823">
    <property type="entry name" value="Ribosomal_uS7_dom_sf"/>
</dbReference>
<dbReference type="NCBIfam" id="TIGR01029">
    <property type="entry name" value="rpsG_bact"/>
    <property type="match status" value="1"/>
</dbReference>
<dbReference type="PANTHER" id="PTHR11205">
    <property type="entry name" value="RIBOSOMAL PROTEIN S7"/>
    <property type="match status" value="1"/>
</dbReference>
<dbReference type="Pfam" id="PF00177">
    <property type="entry name" value="Ribosomal_S7"/>
    <property type="match status" value="1"/>
</dbReference>
<dbReference type="PIRSF" id="PIRSF002122">
    <property type="entry name" value="RPS7p_RPS7a_RPS5e_RPS7o"/>
    <property type="match status" value="1"/>
</dbReference>
<dbReference type="SUPFAM" id="SSF47973">
    <property type="entry name" value="Ribosomal protein S7"/>
    <property type="match status" value="1"/>
</dbReference>
<dbReference type="PROSITE" id="PS00052">
    <property type="entry name" value="RIBOSOMAL_S7"/>
    <property type="match status" value="1"/>
</dbReference>
<proteinExistence type="inferred from homology"/>
<reference key="1">
    <citation type="submission" date="2008-08" db="EMBL/GenBank/DDBJ databases">
        <title>The complete genome sequence of Thermodesulfovibrio yellowstonii strain ATCC 51303 / DSM 11347 / YP87.</title>
        <authorList>
            <person name="Dodson R.J."/>
            <person name="Durkin A.S."/>
            <person name="Wu M."/>
            <person name="Eisen J."/>
            <person name="Sutton G."/>
        </authorList>
    </citation>
    <scope>NUCLEOTIDE SEQUENCE [LARGE SCALE GENOMIC DNA]</scope>
    <source>
        <strain>ATCC 51303 / DSM 11347 / YP87</strain>
    </source>
</reference>
<organism>
    <name type="scientific">Thermodesulfovibrio yellowstonii (strain ATCC 51303 / DSM 11347 / YP87)</name>
    <dbReference type="NCBI Taxonomy" id="289376"/>
    <lineage>
        <taxon>Bacteria</taxon>
        <taxon>Pseudomonadati</taxon>
        <taxon>Nitrospirota</taxon>
        <taxon>Thermodesulfovibrionia</taxon>
        <taxon>Thermodesulfovibrionales</taxon>
        <taxon>Thermodesulfovibrionaceae</taxon>
        <taxon>Thermodesulfovibrio</taxon>
    </lineage>
</organism>
<sequence length="156" mass="18202">MPRRGYVPKREVLPDPKYQSKLVSKLINVIMEDGKKSISEKICYGAFEIIKEKTGQDPLKVFKQAIENIKPVLEVRPRRVGGATYQVPMEVRPNRRLSLALRWLTTYARQRKEKTMKERLAGEILDAYNNVGSSIKKREETHKMAEANRAFAHYRW</sequence>
<accession>B5YG51</accession>
<protein>
    <recommendedName>
        <fullName evidence="1">Small ribosomal subunit protein uS7</fullName>
    </recommendedName>
    <alternativeName>
        <fullName evidence="2">30S ribosomal protein S7</fullName>
    </alternativeName>
</protein>
<gene>
    <name evidence="1" type="primary">rpsG</name>
    <name type="ordered locus">THEYE_A1450</name>
</gene>
<keyword id="KW-1185">Reference proteome</keyword>
<keyword id="KW-0687">Ribonucleoprotein</keyword>
<keyword id="KW-0689">Ribosomal protein</keyword>
<keyword id="KW-0694">RNA-binding</keyword>
<keyword id="KW-0699">rRNA-binding</keyword>
<keyword id="KW-0820">tRNA-binding</keyword>
<comment type="function">
    <text evidence="1">One of the primary rRNA binding proteins, it binds directly to 16S rRNA where it nucleates assembly of the head domain of the 30S subunit. Is located at the subunit interface close to the decoding center, probably blocks exit of the E-site tRNA.</text>
</comment>
<comment type="subunit">
    <text evidence="1">Part of the 30S ribosomal subunit. Contacts proteins S9 and S11.</text>
</comment>
<comment type="similarity">
    <text evidence="1">Belongs to the universal ribosomal protein uS7 family.</text>
</comment>
<evidence type="ECO:0000255" key="1">
    <source>
        <dbReference type="HAMAP-Rule" id="MF_00480"/>
    </source>
</evidence>
<evidence type="ECO:0000305" key="2"/>
<feature type="chain" id="PRO_1000126019" description="Small ribosomal subunit protein uS7">
    <location>
        <begin position="1"/>
        <end position="156"/>
    </location>
</feature>